<reference key="1">
    <citation type="journal article" date="2002" name="Nature">
        <title>The genome sequence of Schizosaccharomyces pombe.</title>
        <authorList>
            <person name="Wood V."/>
            <person name="Gwilliam R."/>
            <person name="Rajandream M.A."/>
            <person name="Lyne M.H."/>
            <person name="Lyne R."/>
            <person name="Stewart A."/>
            <person name="Sgouros J.G."/>
            <person name="Peat N."/>
            <person name="Hayles J."/>
            <person name="Baker S.G."/>
            <person name="Basham D."/>
            <person name="Bowman S."/>
            <person name="Brooks K."/>
            <person name="Brown D."/>
            <person name="Brown S."/>
            <person name="Chillingworth T."/>
            <person name="Churcher C.M."/>
            <person name="Collins M."/>
            <person name="Connor R."/>
            <person name="Cronin A."/>
            <person name="Davis P."/>
            <person name="Feltwell T."/>
            <person name="Fraser A."/>
            <person name="Gentles S."/>
            <person name="Goble A."/>
            <person name="Hamlin N."/>
            <person name="Harris D.E."/>
            <person name="Hidalgo J."/>
            <person name="Hodgson G."/>
            <person name="Holroyd S."/>
            <person name="Hornsby T."/>
            <person name="Howarth S."/>
            <person name="Huckle E.J."/>
            <person name="Hunt S."/>
            <person name="Jagels K."/>
            <person name="James K.D."/>
            <person name="Jones L."/>
            <person name="Jones M."/>
            <person name="Leather S."/>
            <person name="McDonald S."/>
            <person name="McLean J."/>
            <person name="Mooney P."/>
            <person name="Moule S."/>
            <person name="Mungall K.L."/>
            <person name="Murphy L.D."/>
            <person name="Niblett D."/>
            <person name="Odell C."/>
            <person name="Oliver K."/>
            <person name="O'Neil S."/>
            <person name="Pearson D."/>
            <person name="Quail M.A."/>
            <person name="Rabbinowitsch E."/>
            <person name="Rutherford K.M."/>
            <person name="Rutter S."/>
            <person name="Saunders D."/>
            <person name="Seeger K."/>
            <person name="Sharp S."/>
            <person name="Skelton J."/>
            <person name="Simmonds M.N."/>
            <person name="Squares R."/>
            <person name="Squares S."/>
            <person name="Stevens K."/>
            <person name="Taylor K."/>
            <person name="Taylor R.G."/>
            <person name="Tivey A."/>
            <person name="Walsh S.V."/>
            <person name="Warren T."/>
            <person name="Whitehead S."/>
            <person name="Woodward J.R."/>
            <person name="Volckaert G."/>
            <person name="Aert R."/>
            <person name="Robben J."/>
            <person name="Grymonprez B."/>
            <person name="Weltjens I."/>
            <person name="Vanstreels E."/>
            <person name="Rieger M."/>
            <person name="Schaefer M."/>
            <person name="Mueller-Auer S."/>
            <person name="Gabel C."/>
            <person name="Fuchs M."/>
            <person name="Duesterhoeft A."/>
            <person name="Fritzc C."/>
            <person name="Holzer E."/>
            <person name="Moestl D."/>
            <person name="Hilbert H."/>
            <person name="Borzym K."/>
            <person name="Langer I."/>
            <person name="Beck A."/>
            <person name="Lehrach H."/>
            <person name="Reinhardt R."/>
            <person name="Pohl T.M."/>
            <person name="Eger P."/>
            <person name="Zimmermann W."/>
            <person name="Wedler H."/>
            <person name="Wambutt R."/>
            <person name="Purnelle B."/>
            <person name="Goffeau A."/>
            <person name="Cadieu E."/>
            <person name="Dreano S."/>
            <person name="Gloux S."/>
            <person name="Lelaure V."/>
            <person name="Mottier S."/>
            <person name="Galibert F."/>
            <person name="Aves S.J."/>
            <person name="Xiang Z."/>
            <person name="Hunt C."/>
            <person name="Moore K."/>
            <person name="Hurst S.M."/>
            <person name="Lucas M."/>
            <person name="Rochet M."/>
            <person name="Gaillardin C."/>
            <person name="Tallada V.A."/>
            <person name="Garzon A."/>
            <person name="Thode G."/>
            <person name="Daga R.R."/>
            <person name="Cruzado L."/>
            <person name="Jimenez J."/>
            <person name="Sanchez M."/>
            <person name="del Rey F."/>
            <person name="Benito J."/>
            <person name="Dominguez A."/>
            <person name="Revuelta J.L."/>
            <person name="Moreno S."/>
            <person name="Armstrong J."/>
            <person name="Forsburg S.L."/>
            <person name="Cerutti L."/>
            <person name="Lowe T."/>
            <person name="McCombie W.R."/>
            <person name="Paulsen I."/>
            <person name="Potashkin J."/>
            <person name="Shpakovski G.V."/>
            <person name="Ussery D."/>
            <person name="Barrell B.G."/>
            <person name="Nurse P."/>
        </authorList>
    </citation>
    <scope>NUCLEOTIDE SEQUENCE [LARGE SCALE GENOMIC DNA]</scope>
    <source>
        <strain>972 / ATCC 24843</strain>
    </source>
</reference>
<reference key="2">
    <citation type="journal article" date="2006" name="Nat. Biotechnol.">
        <title>ORFeome cloning and global analysis of protein localization in the fission yeast Schizosaccharomyces pombe.</title>
        <authorList>
            <person name="Matsuyama A."/>
            <person name="Arai R."/>
            <person name="Yashiroda Y."/>
            <person name="Shirai A."/>
            <person name="Kamata A."/>
            <person name="Sekido S."/>
            <person name="Kobayashi Y."/>
            <person name="Hashimoto A."/>
            <person name="Hamamoto M."/>
            <person name="Hiraoka Y."/>
            <person name="Horinouchi S."/>
            <person name="Yoshida M."/>
        </authorList>
    </citation>
    <scope>SUBCELLULAR LOCATION [LARGE SCALE ANALYSIS]</scope>
</reference>
<reference key="3">
    <citation type="journal article" date="2012" name="J. Biol. Chem.">
        <title>Histone H3 lysine 14 acetylation is required for activation of a DNA damage checkpoint in fission yeast.</title>
        <authorList>
            <person name="Wang Y."/>
            <person name="Kallgren S.P."/>
            <person name="Reddy B.D."/>
            <person name="Kuntz K."/>
            <person name="Lopez-Maury L."/>
            <person name="Thompson J."/>
            <person name="Watt S."/>
            <person name="Ma C."/>
            <person name="Hou H."/>
            <person name="Shi Y."/>
            <person name="Yates J.R. III"/>
            <person name="Bahler J."/>
            <person name="O'Connell M.J."/>
            <person name="Jia S."/>
        </authorList>
    </citation>
    <scope>IDENTIFICATION BY MASS SPECTROMETRY</scope>
    <scope>IDENTIFICATION IN THE MST2 COMPLEX</scope>
    <scope>FUNCTION</scope>
</reference>
<protein>
    <recommendedName>
        <fullName evidence="5">Pdp3-interacting factor 1</fullName>
        <ecNumber evidence="1">3.1.3.50</ecNumber>
    </recommendedName>
</protein>
<accession>Q9P6N2</accession>
<proteinExistence type="evidence at protein level"/>
<feature type="chain" id="PRO_0000339407" description="Pdp3-interacting factor 1">
    <location>
        <begin position="1"/>
        <end position="229"/>
    </location>
</feature>
<feature type="active site" description="Nucleophile" evidence="2">
    <location>
        <position position="12"/>
    </location>
</feature>
<feature type="active site" description="Proton donor" evidence="2">
    <location>
        <position position="14"/>
    </location>
</feature>
<feature type="binding site" evidence="2">
    <location>
        <position position="12"/>
    </location>
    <ligand>
        <name>Mg(2+)</name>
        <dbReference type="ChEBI" id="CHEBI:18420"/>
    </ligand>
</feature>
<feature type="binding site" evidence="2">
    <location>
        <position position="14"/>
    </location>
    <ligand>
        <name>Mg(2+)</name>
        <dbReference type="ChEBI" id="CHEBI:18420"/>
    </ligand>
</feature>
<feature type="binding site" evidence="2">
    <location>
        <position position="176"/>
    </location>
    <ligand>
        <name>Mg(2+)</name>
        <dbReference type="ChEBI" id="CHEBI:18420"/>
    </ligand>
</feature>
<keyword id="KW-0156">Chromatin regulator</keyword>
<keyword id="KW-0963">Cytoplasm</keyword>
<keyword id="KW-0227">DNA damage</keyword>
<keyword id="KW-0378">Hydrolase</keyword>
<keyword id="KW-0460">Magnesium</keyword>
<keyword id="KW-0479">Metal-binding</keyword>
<keyword id="KW-0539">Nucleus</keyword>
<keyword id="KW-1185">Reference proteome</keyword>
<comment type="function">
    <text evidence="4">Component of the mst2 complex which is a highly specific H3 lysine 14 (H3K14) acetyltransferase that functions together with gcn5 to regulate global levels of H3K14 acetylation (H3K14ac), critical for DNA damage checkpoint activation.</text>
</comment>
<comment type="function">
    <text evidence="1">May also function as a sugar alcohol (polyol) phosphatase that prevents accumulation of toxic levels of polyol phosphates, which can impair glycolysis by inhibiting glucose-6-phosphate isomerase.</text>
</comment>
<comment type="catalytic activity">
    <reaction evidence="1">
        <text>D-ribitol 5-phosphate + H2O = ribitol + phosphate</text>
        <dbReference type="Rhea" id="RHEA:47648"/>
        <dbReference type="ChEBI" id="CHEBI:15377"/>
        <dbReference type="ChEBI" id="CHEBI:15963"/>
        <dbReference type="ChEBI" id="CHEBI:43474"/>
        <dbReference type="ChEBI" id="CHEBI:57695"/>
    </reaction>
    <physiologicalReaction direction="left-to-right" evidence="1">
        <dbReference type="Rhea" id="RHEA:47649"/>
    </physiologicalReaction>
</comment>
<comment type="catalytic activity">
    <reaction evidence="1">
        <text>D-sorbitol 6-phosphate + H2O = D-sorbitol + phosphate</text>
        <dbReference type="Rhea" id="RHEA:24580"/>
        <dbReference type="ChEBI" id="CHEBI:15377"/>
        <dbReference type="ChEBI" id="CHEBI:17924"/>
        <dbReference type="ChEBI" id="CHEBI:43474"/>
        <dbReference type="ChEBI" id="CHEBI:60084"/>
        <dbReference type="EC" id="3.1.3.50"/>
    </reaction>
    <physiologicalReaction direction="left-to-right" evidence="1">
        <dbReference type="Rhea" id="RHEA:24581"/>
    </physiologicalReaction>
</comment>
<comment type="catalytic activity">
    <reaction evidence="1">
        <text>sn-glycerol 1-phosphate + H2O = glycerol + phosphate</text>
        <dbReference type="Rhea" id="RHEA:46084"/>
        <dbReference type="ChEBI" id="CHEBI:15377"/>
        <dbReference type="ChEBI" id="CHEBI:17754"/>
        <dbReference type="ChEBI" id="CHEBI:43474"/>
        <dbReference type="ChEBI" id="CHEBI:57685"/>
    </reaction>
    <physiologicalReaction direction="left-to-right" evidence="1">
        <dbReference type="Rhea" id="RHEA:46085"/>
    </physiologicalReaction>
</comment>
<comment type="catalytic activity">
    <reaction evidence="1">
        <text>D-erythrose 4-phosphate + H2O = D-erythrose + phosphate</text>
        <dbReference type="Rhea" id="RHEA:66376"/>
        <dbReference type="ChEBI" id="CHEBI:15377"/>
        <dbReference type="ChEBI" id="CHEBI:16897"/>
        <dbReference type="ChEBI" id="CHEBI:27904"/>
        <dbReference type="ChEBI" id="CHEBI:43474"/>
    </reaction>
    <physiologicalReaction direction="left-to-right" evidence="1">
        <dbReference type="Rhea" id="RHEA:66377"/>
    </physiologicalReaction>
</comment>
<comment type="cofactor">
    <cofactor evidence="2">
        <name>Mg(2+)</name>
        <dbReference type="ChEBI" id="CHEBI:18420"/>
    </cofactor>
</comment>
<comment type="subunit">
    <text evidence="4">Component of the mst2 complex composed of at least eaf6, mst2, nto1, pdp3, ptf1, ptf2 and tfg3.</text>
</comment>
<comment type="subcellular location">
    <subcellularLocation>
        <location evidence="3">Cytoplasm</location>
    </subcellularLocation>
    <subcellularLocation>
        <location evidence="3">Nucleus</location>
    </subcellularLocation>
</comment>
<comment type="similarity">
    <text evidence="6">Belongs to the HAD-like hydrolase superfamily.</text>
</comment>
<sequence>MAQKKQLYVFSDFDGTITLQDSNDYLTDNFGMGNANRVNLNQQVLDGSISFRDAFAKMLDSVHLSYDEALEVLKKNVAIDPSFKPFYEWCKSQDIRVIILSSGMEPFIRALFEQYLGKEEASSIEIVSNDINVHPDGQWNIVYHDDSHFGHDKSLTIRPYAQLPESKRPHMVYCGDGVSDLSAAKETEHLFAKKGRDLIKYCEREKISFSEFETFADIHKDLQKLFFSS</sequence>
<dbReference type="EC" id="3.1.3.50" evidence="1"/>
<dbReference type="EMBL" id="CU329670">
    <property type="protein sequence ID" value="CAB90159.1"/>
    <property type="molecule type" value="Genomic_DNA"/>
</dbReference>
<dbReference type="RefSeq" id="NP_593841.1">
    <property type="nucleotide sequence ID" value="NM_001019270.2"/>
</dbReference>
<dbReference type="SMR" id="Q9P6N2"/>
<dbReference type="BioGRID" id="279741">
    <property type="interactions" value="27"/>
</dbReference>
<dbReference type="FunCoup" id="Q9P6N2">
    <property type="interactions" value="196"/>
</dbReference>
<dbReference type="STRING" id="284812.Q9P6N2"/>
<dbReference type="iPTMnet" id="Q9P6N2"/>
<dbReference type="PaxDb" id="4896-SPAC823.14.1"/>
<dbReference type="EnsemblFungi" id="SPAC823.14.1">
    <property type="protein sequence ID" value="SPAC823.14.1:pep"/>
    <property type="gene ID" value="SPAC823.14"/>
</dbReference>
<dbReference type="GeneID" id="2543317"/>
<dbReference type="KEGG" id="spo:2543317"/>
<dbReference type="PomBase" id="SPAC823.14">
    <property type="gene designation" value="ptf1"/>
</dbReference>
<dbReference type="VEuPathDB" id="FungiDB:SPAC823.14"/>
<dbReference type="eggNOG" id="ENOG502QRU0">
    <property type="taxonomic scope" value="Eukaryota"/>
</dbReference>
<dbReference type="HOGENOM" id="CLU_058495_1_0_1"/>
<dbReference type="InParanoid" id="Q9P6N2"/>
<dbReference type="OMA" id="VPFHEFD"/>
<dbReference type="PhylomeDB" id="Q9P6N2"/>
<dbReference type="PRO" id="PR:Q9P6N2"/>
<dbReference type="Proteomes" id="UP000002485">
    <property type="component" value="Chromosome I"/>
</dbReference>
<dbReference type="GO" id="GO:0005737">
    <property type="term" value="C:cytoplasm"/>
    <property type="evidence" value="ECO:0000318"/>
    <property type="project" value="GO_Central"/>
</dbReference>
<dbReference type="GO" id="GO:0005829">
    <property type="term" value="C:cytosol"/>
    <property type="evidence" value="ECO:0007005"/>
    <property type="project" value="PomBase"/>
</dbReference>
<dbReference type="GO" id="GO:0005634">
    <property type="term" value="C:nucleus"/>
    <property type="evidence" value="ECO:0007005"/>
    <property type="project" value="PomBase"/>
</dbReference>
<dbReference type="GO" id="GO:0000121">
    <property type="term" value="F:glycerol-1-phosphatase activity"/>
    <property type="evidence" value="ECO:0007669"/>
    <property type="project" value="RHEA"/>
</dbReference>
<dbReference type="GO" id="GO:0036424">
    <property type="term" value="F:L-phosphoserine phosphatase activity"/>
    <property type="evidence" value="ECO:0000318"/>
    <property type="project" value="GO_Central"/>
</dbReference>
<dbReference type="GO" id="GO:0000287">
    <property type="term" value="F:magnesium ion binding"/>
    <property type="evidence" value="ECO:0000318"/>
    <property type="project" value="GO_Central"/>
</dbReference>
<dbReference type="GO" id="GO:0110130">
    <property type="term" value="F:ribitol-5-phosphatase activity"/>
    <property type="evidence" value="ECO:0007669"/>
    <property type="project" value="RHEA"/>
</dbReference>
<dbReference type="GO" id="GO:0050286">
    <property type="term" value="F:sorbitol-6-phosphatase activity"/>
    <property type="evidence" value="ECO:0007669"/>
    <property type="project" value="UniProtKB-EC"/>
</dbReference>
<dbReference type="GO" id="GO:0006325">
    <property type="term" value="P:chromatin organization"/>
    <property type="evidence" value="ECO:0007669"/>
    <property type="project" value="UniProtKB-KW"/>
</dbReference>
<dbReference type="GO" id="GO:0006974">
    <property type="term" value="P:DNA damage response"/>
    <property type="evidence" value="ECO:0007669"/>
    <property type="project" value="UniProtKB-KW"/>
</dbReference>
<dbReference type="GO" id="GO:0006564">
    <property type="term" value="P:L-serine biosynthetic process"/>
    <property type="evidence" value="ECO:0000318"/>
    <property type="project" value="GO_Central"/>
</dbReference>
<dbReference type="CDD" id="cd07524">
    <property type="entry name" value="HAD_Pase"/>
    <property type="match status" value="1"/>
</dbReference>
<dbReference type="Gene3D" id="3.90.1470.20">
    <property type="match status" value="1"/>
</dbReference>
<dbReference type="Gene3D" id="3.40.50.1000">
    <property type="entry name" value="HAD superfamily/HAD-like"/>
    <property type="match status" value="1"/>
</dbReference>
<dbReference type="InterPro" id="IPR050849">
    <property type="entry name" value="HAD-like_hydrolase_phosphatase"/>
</dbReference>
<dbReference type="InterPro" id="IPR036412">
    <property type="entry name" value="HAD-like_sf"/>
</dbReference>
<dbReference type="InterPro" id="IPR006384">
    <property type="entry name" value="HAD_hydro_PyrdxlP_Pase-like"/>
</dbReference>
<dbReference type="InterPro" id="IPR023214">
    <property type="entry name" value="HAD_sf"/>
</dbReference>
<dbReference type="NCBIfam" id="TIGR01489">
    <property type="entry name" value="DKMTPPase-SF"/>
    <property type="match status" value="1"/>
</dbReference>
<dbReference type="NCBIfam" id="TIGR01488">
    <property type="entry name" value="HAD-SF-IB"/>
    <property type="match status" value="1"/>
</dbReference>
<dbReference type="PANTHER" id="PTHR28181:SF2">
    <property type="entry name" value="PHOSPHORIC MONOESTER HYDROLASE"/>
    <property type="match status" value="1"/>
</dbReference>
<dbReference type="PANTHER" id="PTHR28181">
    <property type="entry name" value="UPF0655 PROTEIN YCR015C"/>
    <property type="match status" value="1"/>
</dbReference>
<dbReference type="Pfam" id="PF12710">
    <property type="entry name" value="HAD"/>
    <property type="match status" value="1"/>
</dbReference>
<dbReference type="SUPFAM" id="SSF56784">
    <property type="entry name" value="HAD-like"/>
    <property type="match status" value="1"/>
</dbReference>
<name>PTF1_SCHPO</name>
<gene>
    <name evidence="5" type="primary">ptf1</name>
    <name evidence="7" type="ORF">SPAC823.14</name>
</gene>
<evidence type="ECO:0000250" key="1">
    <source>
        <dbReference type="UniProtKB" id="P53981"/>
    </source>
</evidence>
<evidence type="ECO:0000250" key="2">
    <source>
        <dbReference type="UniProtKB" id="Q58989"/>
    </source>
</evidence>
<evidence type="ECO:0000269" key="3">
    <source>
    </source>
</evidence>
<evidence type="ECO:0000269" key="4">
    <source>
    </source>
</evidence>
<evidence type="ECO:0000303" key="5">
    <source>
    </source>
</evidence>
<evidence type="ECO:0000305" key="6"/>
<evidence type="ECO:0000312" key="7">
    <source>
        <dbReference type="PomBase" id="SPAC823.14"/>
    </source>
</evidence>
<organism>
    <name type="scientific">Schizosaccharomyces pombe (strain 972 / ATCC 24843)</name>
    <name type="common">Fission yeast</name>
    <dbReference type="NCBI Taxonomy" id="284812"/>
    <lineage>
        <taxon>Eukaryota</taxon>
        <taxon>Fungi</taxon>
        <taxon>Dikarya</taxon>
        <taxon>Ascomycota</taxon>
        <taxon>Taphrinomycotina</taxon>
        <taxon>Schizosaccharomycetes</taxon>
        <taxon>Schizosaccharomycetales</taxon>
        <taxon>Schizosaccharomycetaceae</taxon>
        <taxon>Schizosaccharomyces</taxon>
    </lineage>
</organism>